<name>RSGA_HAEI8</name>
<dbReference type="EC" id="3.6.1.-" evidence="1"/>
<dbReference type="EMBL" id="CP000057">
    <property type="protein sequence ID" value="AAX88768.1"/>
    <property type="molecule type" value="Genomic_DNA"/>
</dbReference>
<dbReference type="RefSeq" id="WP_011272762.1">
    <property type="nucleotide sequence ID" value="NC_007146.2"/>
</dbReference>
<dbReference type="SMR" id="Q4QJM9"/>
<dbReference type="GeneID" id="93220723"/>
<dbReference type="KEGG" id="hit:NTHI2023"/>
<dbReference type="HOGENOM" id="CLU_033617_2_0_6"/>
<dbReference type="Proteomes" id="UP000002525">
    <property type="component" value="Chromosome"/>
</dbReference>
<dbReference type="GO" id="GO:0005737">
    <property type="term" value="C:cytoplasm"/>
    <property type="evidence" value="ECO:0007669"/>
    <property type="project" value="UniProtKB-SubCell"/>
</dbReference>
<dbReference type="GO" id="GO:0005525">
    <property type="term" value="F:GTP binding"/>
    <property type="evidence" value="ECO:0007669"/>
    <property type="project" value="UniProtKB-UniRule"/>
</dbReference>
<dbReference type="GO" id="GO:0003924">
    <property type="term" value="F:GTPase activity"/>
    <property type="evidence" value="ECO:0007669"/>
    <property type="project" value="UniProtKB-UniRule"/>
</dbReference>
<dbReference type="GO" id="GO:0046872">
    <property type="term" value="F:metal ion binding"/>
    <property type="evidence" value="ECO:0007669"/>
    <property type="project" value="UniProtKB-KW"/>
</dbReference>
<dbReference type="GO" id="GO:0019843">
    <property type="term" value="F:rRNA binding"/>
    <property type="evidence" value="ECO:0007669"/>
    <property type="project" value="UniProtKB-KW"/>
</dbReference>
<dbReference type="GO" id="GO:0042274">
    <property type="term" value="P:ribosomal small subunit biogenesis"/>
    <property type="evidence" value="ECO:0007669"/>
    <property type="project" value="UniProtKB-UniRule"/>
</dbReference>
<dbReference type="CDD" id="cd01854">
    <property type="entry name" value="YjeQ_EngC"/>
    <property type="match status" value="1"/>
</dbReference>
<dbReference type="Gene3D" id="2.40.50.140">
    <property type="entry name" value="Nucleic acid-binding proteins"/>
    <property type="match status" value="1"/>
</dbReference>
<dbReference type="Gene3D" id="3.40.50.300">
    <property type="entry name" value="P-loop containing nucleotide triphosphate hydrolases"/>
    <property type="match status" value="1"/>
</dbReference>
<dbReference type="Gene3D" id="1.10.40.50">
    <property type="entry name" value="Probable gtpase engc, domain 3"/>
    <property type="match status" value="1"/>
</dbReference>
<dbReference type="HAMAP" id="MF_01820">
    <property type="entry name" value="GTPase_RsgA"/>
    <property type="match status" value="1"/>
</dbReference>
<dbReference type="InterPro" id="IPR030378">
    <property type="entry name" value="G_CP_dom"/>
</dbReference>
<dbReference type="InterPro" id="IPR012340">
    <property type="entry name" value="NA-bd_OB-fold"/>
</dbReference>
<dbReference type="InterPro" id="IPR027417">
    <property type="entry name" value="P-loop_NTPase"/>
</dbReference>
<dbReference type="InterPro" id="IPR004881">
    <property type="entry name" value="Ribosome_biogen_GTPase_RsgA"/>
</dbReference>
<dbReference type="InterPro" id="IPR010914">
    <property type="entry name" value="RsgA_GTPase_dom"/>
</dbReference>
<dbReference type="NCBIfam" id="NF008931">
    <property type="entry name" value="PRK12288.1"/>
    <property type="match status" value="1"/>
</dbReference>
<dbReference type="NCBIfam" id="TIGR00157">
    <property type="entry name" value="ribosome small subunit-dependent GTPase A"/>
    <property type="match status" value="1"/>
</dbReference>
<dbReference type="PANTHER" id="PTHR32120">
    <property type="entry name" value="SMALL RIBOSOMAL SUBUNIT BIOGENESIS GTPASE RSGA"/>
    <property type="match status" value="1"/>
</dbReference>
<dbReference type="PANTHER" id="PTHR32120:SF11">
    <property type="entry name" value="SMALL RIBOSOMAL SUBUNIT BIOGENESIS GTPASE RSGA 1, MITOCHONDRIAL-RELATED"/>
    <property type="match status" value="1"/>
</dbReference>
<dbReference type="Pfam" id="PF03193">
    <property type="entry name" value="RsgA_GTPase"/>
    <property type="match status" value="1"/>
</dbReference>
<dbReference type="SUPFAM" id="SSF52540">
    <property type="entry name" value="P-loop containing nucleoside triphosphate hydrolases"/>
    <property type="match status" value="1"/>
</dbReference>
<dbReference type="PROSITE" id="PS50936">
    <property type="entry name" value="ENGC_GTPASE"/>
    <property type="match status" value="1"/>
</dbReference>
<dbReference type="PROSITE" id="PS51721">
    <property type="entry name" value="G_CP"/>
    <property type="match status" value="1"/>
</dbReference>
<protein>
    <recommendedName>
        <fullName evidence="1">Small ribosomal subunit biogenesis GTPase RsgA</fullName>
        <ecNumber evidence="1">3.6.1.-</ecNumber>
    </recommendedName>
</protein>
<gene>
    <name evidence="1" type="primary">rsgA</name>
    <name type="ordered locus">NTHI2023</name>
</gene>
<proteinExistence type="inferred from homology"/>
<organism>
    <name type="scientific">Haemophilus influenzae (strain 86-028NP)</name>
    <dbReference type="NCBI Taxonomy" id="281310"/>
    <lineage>
        <taxon>Bacteria</taxon>
        <taxon>Pseudomonadati</taxon>
        <taxon>Pseudomonadota</taxon>
        <taxon>Gammaproteobacteria</taxon>
        <taxon>Pasteurellales</taxon>
        <taxon>Pasteurellaceae</taxon>
        <taxon>Haemophilus</taxon>
    </lineage>
</organism>
<accession>Q4QJM9</accession>
<reference key="1">
    <citation type="journal article" date="2005" name="J. Bacteriol.">
        <title>Genomic sequence of an otitis media isolate of nontypeable Haemophilus influenzae: comparative study with H. influenzae serotype d, strain KW20.</title>
        <authorList>
            <person name="Harrison A."/>
            <person name="Dyer D.W."/>
            <person name="Gillaspy A."/>
            <person name="Ray W.C."/>
            <person name="Mungur R."/>
            <person name="Carson M.B."/>
            <person name="Zhong H."/>
            <person name="Gipson J."/>
            <person name="Gipson M."/>
            <person name="Johnson L.S."/>
            <person name="Lewis L."/>
            <person name="Bakaletz L.O."/>
            <person name="Munson R.S. Jr."/>
        </authorList>
    </citation>
    <scope>NUCLEOTIDE SEQUENCE [LARGE SCALE GENOMIC DNA]</scope>
    <source>
        <strain>86-028NP</strain>
    </source>
</reference>
<sequence length="346" mass="38845">MAKRKLTQNQTRRIQSNNAKTLHRHKKKDIEWSDEMLGESQEGVVVTRYSIHADVENEQGEIYRCNLRRTLSSLVVGDKVVWRKGNEQLQGVSGVIEAIHPRENEISRPDYYDGLKPIAANIDRIIIVSAVLPTLSLNIIDRYLVVCEIAGITPLIVLNKVDLLAQEQRQEIEDQLKIYQDIGYEILMISAKSGENMEKLTALLAQGTAIFVGQSGVGKSSLINHILPSVNAQVGDVSETSGLGQHTTTSSRLYHLPQGGNLIDSPGIREFGLWHLDAEQITKGYREFQYVLGTCKFRDCKHLSDPGCALREAVEQGKISPVRYDSYHRLIESLSETKSQRHFSLV</sequence>
<keyword id="KW-0963">Cytoplasm</keyword>
<keyword id="KW-0342">GTP-binding</keyword>
<keyword id="KW-0378">Hydrolase</keyword>
<keyword id="KW-0479">Metal-binding</keyword>
<keyword id="KW-0547">Nucleotide-binding</keyword>
<keyword id="KW-0690">Ribosome biogenesis</keyword>
<keyword id="KW-0694">RNA-binding</keyword>
<keyword id="KW-0699">rRNA-binding</keyword>
<keyword id="KW-0862">Zinc</keyword>
<comment type="function">
    <text evidence="1">One of several proteins that assist in the late maturation steps of the functional core of the 30S ribosomal subunit. Helps release RbfA from mature subunits. May play a role in the assembly of ribosomal proteins into the subunit. Circularly permuted GTPase that catalyzes slow GTP hydrolysis, GTPase activity is stimulated by the 30S ribosomal subunit.</text>
</comment>
<comment type="cofactor">
    <cofactor evidence="1">
        <name>Zn(2+)</name>
        <dbReference type="ChEBI" id="CHEBI:29105"/>
    </cofactor>
    <text evidence="1">Binds 1 zinc ion per subunit.</text>
</comment>
<comment type="subunit">
    <text evidence="1">Monomer. Associates with 30S ribosomal subunit, binds 16S rRNA.</text>
</comment>
<comment type="subcellular location">
    <subcellularLocation>
        <location evidence="1">Cytoplasm</location>
    </subcellularLocation>
</comment>
<comment type="similarity">
    <text evidence="1">Belongs to the TRAFAC class YlqF/YawG GTPase family. RsgA subfamily.</text>
</comment>
<feature type="chain" id="PRO_1000188082" description="Small ribosomal subunit biogenesis GTPase RsgA">
    <location>
        <begin position="1"/>
        <end position="346"/>
    </location>
</feature>
<feature type="domain" description="CP-type G" evidence="2">
    <location>
        <begin position="103"/>
        <end position="271"/>
    </location>
</feature>
<feature type="region of interest" description="Disordered" evidence="3">
    <location>
        <begin position="1"/>
        <end position="26"/>
    </location>
</feature>
<feature type="compositionally biased region" description="Polar residues" evidence="3">
    <location>
        <begin position="7"/>
        <end position="20"/>
    </location>
</feature>
<feature type="binding site" evidence="1">
    <location>
        <begin position="159"/>
        <end position="162"/>
    </location>
    <ligand>
        <name>GTP</name>
        <dbReference type="ChEBI" id="CHEBI:37565"/>
    </ligand>
</feature>
<feature type="binding site" evidence="1">
    <location>
        <begin position="213"/>
        <end position="221"/>
    </location>
    <ligand>
        <name>GTP</name>
        <dbReference type="ChEBI" id="CHEBI:37565"/>
    </ligand>
</feature>
<feature type="binding site" evidence="1">
    <location>
        <position position="295"/>
    </location>
    <ligand>
        <name>Zn(2+)</name>
        <dbReference type="ChEBI" id="CHEBI:29105"/>
    </ligand>
</feature>
<feature type="binding site" evidence="1">
    <location>
        <position position="300"/>
    </location>
    <ligand>
        <name>Zn(2+)</name>
        <dbReference type="ChEBI" id="CHEBI:29105"/>
    </ligand>
</feature>
<feature type="binding site" evidence="1">
    <location>
        <position position="302"/>
    </location>
    <ligand>
        <name>Zn(2+)</name>
        <dbReference type="ChEBI" id="CHEBI:29105"/>
    </ligand>
</feature>
<feature type="binding site" evidence="1">
    <location>
        <position position="308"/>
    </location>
    <ligand>
        <name>Zn(2+)</name>
        <dbReference type="ChEBI" id="CHEBI:29105"/>
    </ligand>
</feature>
<evidence type="ECO:0000255" key="1">
    <source>
        <dbReference type="HAMAP-Rule" id="MF_01820"/>
    </source>
</evidence>
<evidence type="ECO:0000255" key="2">
    <source>
        <dbReference type="PROSITE-ProRule" id="PRU01058"/>
    </source>
</evidence>
<evidence type="ECO:0000256" key="3">
    <source>
        <dbReference type="SAM" id="MobiDB-lite"/>
    </source>
</evidence>